<name>VF183_ASFK5</name>
<dbReference type="EMBL" id="AY261360">
    <property type="status" value="NOT_ANNOTATED_CDS"/>
    <property type="molecule type" value="Genomic_DNA"/>
</dbReference>
<dbReference type="Proteomes" id="UP000000861">
    <property type="component" value="Segment"/>
</dbReference>
<organism>
    <name type="scientific">African swine fever virus (isolate Pig/Kenya/KEN-50/1950)</name>
    <name type="common">ASFV</name>
    <dbReference type="NCBI Taxonomy" id="561445"/>
    <lineage>
        <taxon>Viruses</taxon>
        <taxon>Varidnaviria</taxon>
        <taxon>Bamfordvirae</taxon>
        <taxon>Nucleocytoviricota</taxon>
        <taxon>Pokkesviricetes</taxon>
        <taxon>Asfuvirales</taxon>
        <taxon>Asfarviridae</taxon>
        <taxon>Asfivirus</taxon>
        <taxon>African swine fever virus</taxon>
    </lineage>
</organism>
<organismHost>
    <name type="scientific">Ornithodoros</name>
    <name type="common">relapsing fever ticks</name>
    <dbReference type="NCBI Taxonomy" id="6937"/>
</organismHost>
<organismHost>
    <name type="scientific">Phacochoerus aethiopicus</name>
    <name type="common">Warthog</name>
    <dbReference type="NCBI Taxonomy" id="85517"/>
</organismHost>
<organismHost>
    <name type="scientific">Phacochoerus africanus</name>
    <name type="common">Warthog</name>
    <dbReference type="NCBI Taxonomy" id="41426"/>
</organismHost>
<organismHost>
    <name type="scientific">Potamochoerus larvatus</name>
    <name type="common">Bushpig</name>
    <dbReference type="NCBI Taxonomy" id="273792"/>
</organismHost>
<organismHost>
    <name type="scientific">Sus scrofa</name>
    <name type="common">Pig</name>
    <dbReference type="NCBI Taxonomy" id="9823"/>
</organismHost>
<gene>
    <name type="ordered locus">Ken-122</name>
</gene>
<evidence type="ECO:0000305" key="1"/>
<keyword id="KW-0426">Late protein</keyword>
<sequence>MSVVVGGVEYSLNNWAKYEIKRRAAELESVNYYPRCEYIMPEDIVVSILGSKPNCPFLEALKRFHDFLNKRRIIFKEGYLVIPWMGAQDVADMIHHVENRINLGHLEDLAHMLKLITYHKSLDTSINQSFENLYAFKFPDANIETHELKLIRQLEKKMYGYILRLEKLQTMLTFYIEFLLKQV</sequence>
<reference key="1">
    <citation type="submission" date="2003-03" db="EMBL/GenBank/DDBJ databases">
        <title>African swine fever virus genomes.</title>
        <authorList>
            <person name="Kutish G.F."/>
            <person name="Rock D.L."/>
        </authorList>
    </citation>
    <scope>NUCLEOTIDE SEQUENCE [LARGE SCALE GENOMIC DNA]</scope>
</reference>
<comment type="induction">
    <text evidence="1">Expressed in the late phase of the viral replicative cycle.</text>
</comment>
<comment type="similarity">
    <text evidence="1">Belongs to the asfivirus S183L family.</text>
</comment>
<accession>P0CA84</accession>
<protein>
    <recommendedName>
        <fullName>Uncharacterized protein S183L</fullName>
        <shortName>pS183L</shortName>
    </recommendedName>
</protein>
<feature type="chain" id="PRO_0000373568" description="Uncharacterized protein S183L">
    <location>
        <begin position="1"/>
        <end position="183"/>
    </location>
</feature>
<proteinExistence type="inferred from homology"/>